<keyword id="KW-0021">Allosteric enzyme</keyword>
<keyword id="KW-0328">Glycosyltransferase</keyword>
<keyword id="KW-0342">GTP-binding</keyword>
<keyword id="KW-0460">Magnesium</keyword>
<keyword id="KW-0547">Nucleotide-binding</keyword>
<keyword id="KW-0808">Transferase</keyword>
<comment type="function">
    <text evidence="1">Catalyzes the conversion of uracil and 5-phospho-alpha-D-ribose 1-diphosphate (PRPP) to UMP and diphosphate.</text>
</comment>
<comment type="catalytic activity">
    <reaction evidence="1">
        <text>UMP + diphosphate = 5-phospho-alpha-D-ribose 1-diphosphate + uracil</text>
        <dbReference type="Rhea" id="RHEA:13017"/>
        <dbReference type="ChEBI" id="CHEBI:17568"/>
        <dbReference type="ChEBI" id="CHEBI:33019"/>
        <dbReference type="ChEBI" id="CHEBI:57865"/>
        <dbReference type="ChEBI" id="CHEBI:58017"/>
        <dbReference type="EC" id="2.4.2.9"/>
    </reaction>
</comment>
<comment type="cofactor">
    <cofactor evidence="1">
        <name>Mg(2+)</name>
        <dbReference type="ChEBI" id="CHEBI:18420"/>
    </cofactor>
    <text evidence="1">Binds 1 Mg(2+) ion per subunit. The magnesium is bound as Mg-PRPP.</text>
</comment>
<comment type="activity regulation">
    <text evidence="1">Allosterically activated by GTP.</text>
</comment>
<comment type="pathway">
    <text evidence="1">Pyrimidine metabolism; UMP biosynthesis via salvage pathway; UMP from uracil: step 1/1.</text>
</comment>
<comment type="similarity">
    <text evidence="1">Belongs to the UPRTase family.</text>
</comment>
<feature type="chain" id="PRO_1000053689" description="Uracil phosphoribosyltransferase">
    <location>
        <begin position="1"/>
        <end position="216"/>
    </location>
</feature>
<feature type="binding site" evidence="1">
    <location>
        <position position="85"/>
    </location>
    <ligand>
        <name>5-phospho-alpha-D-ribose 1-diphosphate</name>
        <dbReference type="ChEBI" id="CHEBI:58017"/>
    </ligand>
</feature>
<feature type="binding site" evidence="1">
    <location>
        <position position="110"/>
    </location>
    <ligand>
        <name>5-phospho-alpha-D-ribose 1-diphosphate</name>
        <dbReference type="ChEBI" id="CHEBI:58017"/>
    </ligand>
</feature>
<feature type="binding site" evidence="1">
    <location>
        <begin position="135"/>
        <end position="143"/>
    </location>
    <ligand>
        <name>5-phospho-alpha-D-ribose 1-diphosphate</name>
        <dbReference type="ChEBI" id="CHEBI:58017"/>
    </ligand>
</feature>
<feature type="binding site" evidence="1">
    <location>
        <position position="200"/>
    </location>
    <ligand>
        <name>uracil</name>
        <dbReference type="ChEBI" id="CHEBI:17568"/>
    </ligand>
</feature>
<feature type="binding site" evidence="1">
    <location>
        <begin position="205"/>
        <end position="207"/>
    </location>
    <ligand>
        <name>uracil</name>
        <dbReference type="ChEBI" id="CHEBI:17568"/>
    </ligand>
</feature>
<feature type="binding site" evidence="1">
    <location>
        <position position="206"/>
    </location>
    <ligand>
        <name>5-phospho-alpha-D-ribose 1-diphosphate</name>
        <dbReference type="ChEBI" id="CHEBI:58017"/>
    </ligand>
</feature>
<accession>A3N7G1</accession>
<proteinExistence type="inferred from homology"/>
<name>UPP_BURP6</name>
<dbReference type="EC" id="2.4.2.9" evidence="1"/>
<dbReference type="EMBL" id="CP000570">
    <property type="protein sequence ID" value="ABN83933.1"/>
    <property type="molecule type" value="Genomic_DNA"/>
</dbReference>
<dbReference type="RefSeq" id="WP_009973140.1">
    <property type="nucleotide sequence ID" value="NC_009074.1"/>
</dbReference>
<dbReference type="SMR" id="A3N7G1"/>
<dbReference type="KEGG" id="bpd:BURPS668_1233"/>
<dbReference type="HOGENOM" id="CLU_067096_2_2_4"/>
<dbReference type="UniPathway" id="UPA00574">
    <property type="reaction ID" value="UER00636"/>
</dbReference>
<dbReference type="GO" id="GO:0005525">
    <property type="term" value="F:GTP binding"/>
    <property type="evidence" value="ECO:0007669"/>
    <property type="project" value="UniProtKB-KW"/>
</dbReference>
<dbReference type="GO" id="GO:0000287">
    <property type="term" value="F:magnesium ion binding"/>
    <property type="evidence" value="ECO:0007669"/>
    <property type="project" value="UniProtKB-UniRule"/>
</dbReference>
<dbReference type="GO" id="GO:0004845">
    <property type="term" value="F:uracil phosphoribosyltransferase activity"/>
    <property type="evidence" value="ECO:0007669"/>
    <property type="project" value="UniProtKB-UniRule"/>
</dbReference>
<dbReference type="GO" id="GO:0044206">
    <property type="term" value="P:UMP salvage"/>
    <property type="evidence" value="ECO:0007669"/>
    <property type="project" value="UniProtKB-UniRule"/>
</dbReference>
<dbReference type="GO" id="GO:0006223">
    <property type="term" value="P:uracil salvage"/>
    <property type="evidence" value="ECO:0007669"/>
    <property type="project" value="InterPro"/>
</dbReference>
<dbReference type="CDD" id="cd06223">
    <property type="entry name" value="PRTases_typeI"/>
    <property type="match status" value="1"/>
</dbReference>
<dbReference type="FunFam" id="3.40.50.2020:FF:000003">
    <property type="entry name" value="Uracil phosphoribosyltransferase"/>
    <property type="match status" value="1"/>
</dbReference>
<dbReference type="Gene3D" id="3.40.50.2020">
    <property type="match status" value="1"/>
</dbReference>
<dbReference type="HAMAP" id="MF_01218_B">
    <property type="entry name" value="Upp_B"/>
    <property type="match status" value="1"/>
</dbReference>
<dbReference type="InterPro" id="IPR000836">
    <property type="entry name" value="PRibTrfase_dom"/>
</dbReference>
<dbReference type="InterPro" id="IPR029057">
    <property type="entry name" value="PRTase-like"/>
</dbReference>
<dbReference type="InterPro" id="IPR034332">
    <property type="entry name" value="Upp_B"/>
</dbReference>
<dbReference type="InterPro" id="IPR050054">
    <property type="entry name" value="UPRTase/APRTase"/>
</dbReference>
<dbReference type="InterPro" id="IPR005765">
    <property type="entry name" value="Ura_phspho_trans"/>
</dbReference>
<dbReference type="NCBIfam" id="NF001097">
    <property type="entry name" value="PRK00129.1"/>
    <property type="match status" value="1"/>
</dbReference>
<dbReference type="NCBIfam" id="TIGR01091">
    <property type="entry name" value="upp"/>
    <property type="match status" value="1"/>
</dbReference>
<dbReference type="PANTHER" id="PTHR32315">
    <property type="entry name" value="ADENINE PHOSPHORIBOSYLTRANSFERASE"/>
    <property type="match status" value="1"/>
</dbReference>
<dbReference type="PANTHER" id="PTHR32315:SF4">
    <property type="entry name" value="URACIL PHOSPHORIBOSYLTRANSFERASE, CHLOROPLASTIC"/>
    <property type="match status" value="1"/>
</dbReference>
<dbReference type="Pfam" id="PF14681">
    <property type="entry name" value="UPRTase"/>
    <property type="match status" value="1"/>
</dbReference>
<dbReference type="SUPFAM" id="SSF53271">
    <property type="entry name" value="PRTase-like"/>
    <property type="match status" value="1"/>
</dbReference>
<organism>
    <name type="scientific">Burkholderia pseudomallei (strain 668)</name>
    <dbReference type="NCBI Taxonomy" id="320373"/>
    <lineage>
        <taxon>Bacteria</taxon>
        <taxon>Pseudomonadati</taxon>
        <taxon>Pseudomonadota</taxon>
        <taxon>Betaproteobacteria</taxon>
        <taxon>Burkholderiales</taxon>
        <taxon>Burkholderiaceae</taxon>
        <taxon>Burkholderia</taxon>
        <taxon>pseudomallei group</taxon>
    </lineage>
</organism>
<protein>
    <recommendedName>
        <fullName evidence="1">Uracil phosphoribosyltransferase</fullName>
        <ecNumber evidence="1">2.4.2.9</ecNumber>
    </recommendedName>
    <alternativeName>
        <fullName evidence="1">UMP pyrophosphorylase</fullName>
    </alternativeName>
    <alternativeName>
        <fullName evidence="1">UPRTase</fullName>
    </alternativeName>
</protein>
<gene>
    <name evidence="1" type="primary">upp</name>
    <name type="ordered locus">BURPS668_1233</name>
</gene>
<sequence length="216" mass="24074">MKQDSRFPNLFILDHPLIQHKLTHMRDKDTSTRTFRELLREITLLMGYEITRNLPITTKRVETPLVEIDAPVIAGKKLAIVPVLRAGVGMSDGLLELIPSARVGHIGVYRANDHRPVEYLVRLPDLEDRIFILCDPMVATGYSAAHAIDVLKRRGVPGERLMFLALVAAPEGVQVFQDAHPDVKLYVASLDSHLDDHAYIVPGLGDAGDRLFGTKN</sequence>
<reference key="1">
    <citation type="journal article" date="2010" name="Genome Biol. Evol.">
        <title>Continuing evolution of Burkholderia mallei through genome reduction and large-scale rearrangements.</title>
        <authorList>
            <person name="Losada L."/>
            <person name="Ronning C.M."/>
            <person name="DeShazer D."/>
            <person name="Woods D."/>
            <person name="Fedorova N."/>
            <person name="Kim H.S."/>
            <person name="Shabalina S.A."/>
            <person name="Pearson T.R."/>
            <person name="Brinkac L."/>
            <person name="Tan P."/>
            <person name="Nandi T."/>
            <person name="Crabtree J."/>
            <person name="Badger J."/>
            <person name="Beckstrom-Sternberg S."/>
            <person name="Saqib M."/>
            <person name="Schutzer S.E."/>
            <person name="Keim P."/>
            <person name="Nierman W.C."/>
        </authorList>
    </citation>
    <scope>NUCLEOTIDE SEQUENCE [LARGE SCALE GENOMIC DNA]</scope>
    <source>
        <strain>668</strain>
    </source>
</reference>
<evidence type="ECO:0000255" key="1">
    <source>
        <dbReference type="HAMAP-Rule" id="MF_01218"/>
    </source>
</evidence>